<organism>
    <name type="scientific">Pogonomyrmex rugosus</name>
    <name type="common">Desert harvester ant</name>
    <dbReference type="NCBI Taxonomy" id="144042"/>
    <lineage>
        <taxon>Eukaryota</taxon>
        <taxon>Metazoa</taxon>
        <taxon>Ecdysozoa</taxon>
        <taxon>Arthropoda</taxon>
        <taxon>Hexapoda</taxon>
        <taxon>Insecta</taxon>
        <taxon>Pterygota</taxon>
        <taxon>Neoptera</taxon>
        <taxon>Endopterygota</taxon>
        <taxon>Hymenoptera</taxon>
        <taxon>Apocrita</taxon>
        <taxon>Aculeata</taxon>
        <taxon>Formicoidea</taxon>
        <taxon>Formicidae</taxon>
        <taxon>Myrmicinae</taxon>
        <taxon>Pogonomyrmex</taxon>
    </lineage>
</organism>
<name>TX2B_POGRU</name>
<evidence type="ECO:0000250" key="1">
    <source>
        <dbReference type="UniProtKB" id="A0A8U0LTF0"/>
    </source>
</evidence>
<evidence type="ECO:0000250" key="2">
    <source>
        <dbReference type="UniProtKB" id="P0DRD0"/>
    </source>
</evidence>
<evidence type="ECO:0000250" key="3">
    <source>
        <dbReference type="UniProtKB" id="P0DX61"/>
    </source>
</evidence>
<evidence type="ECO:0000256" key="4">
    <source>
        <dbReference type="SAM" id="MobiDB-lite"/>
    </source>
</evidence>
<evidence type="ECO:0000303" key="5">
    <source>
    </source>
</evidence>
<evidence type="ECO:0000305" key="6"/>
<evidence type="ECO:0000305" key="7">
    <source>
    </source>
</evidence>
<comment type="function">
    <text evidence="1 2 3">Vertebrate-selective toxin that causes pain by targeting voltage-gated sodium channels.</text>
</comment>
<comment type="subcellular location">
    <subcellularLocation>
        <location evidence="7">Secreted</location>
    </subcellularLocation>
</comment>
<comment type="tissue specificity">
    <text evidence="7">Expressed by the venom gland.</text>
</comment>
<comment type="similarity">
    <text evidence="6">Belongs to the formicidae venom clade 1 family.</text>
</comment>
<reference key="1">
    <citation type="journal article" date="2024" name="J. Biol. Chem.">
        <title>Peptide toxins that target vertebrate voltage-gated sodium channels underly the painful stings of harvester ants.</title>
        <authorList>
            <person name="Robinson S.D."/>
            <person name="Deuis J.R."/>
            <person name="Niu P."/>
            <person name="Touchard A."/>
            <person name="Mueller A."/>
            <person name="Schendel V."/>
            <person name="Brinkwirth N."/>
            <person name="King G.F."/>
            <person name="Vetter I."/>
            <person name="Schmidt J.O."/>
        </authorList>
    </citation>
    <scope>NUCLEOTIDE SEQUENCE [MRNA]</scope>
    <scope>PROBABLE AMIDATION AT ASN-61</scope>
    <source>
        <tissue>Venom gland</tissue>
    </source>
</reference>
<feature type="propeptide" id="PRO_0000461245" evidence="7">
    <location>
        <begin position="1" status="less than"/>
        <end position="34"/>
    </location>
</feature>
<feature type="peptide" id="PRO_0000461246" description="Myrmicitoxin(1)-Pr2b" evidence="7">
    <location>
        <begin position="35"/>
        <end position="61"/>
    </location>
</feature>
<feature type="region of interest" description="Disordered" evidence="4">
    <location>
        <begin position="1"/>
        <end position="20"/>
    </location>
</feature>
<feature type="compositionally biased region" description="Acidic residues" evidence="4">
    <location>
        <begin position="1"/>
        <end position="10"/>
    </location>
</feature>
<feature type="compositionally biased region" description="Low complexity" evidence="4">
    <location>
        <begin position="11"/>
        <end position="20"/>
    </location>
</feature>
<feature type="modified residue" description="Asparagine amide" evidence="7">
    <location>
        <position position="61"/>
    </location>
</feature>
<feature type="non-terminal residue">
    <location>
        <position position="1"/>
    </location>
</feature>
<protein>
    <recommendedName>
        <fullName evidence="5">Myrmicitoxin(1)-Pr2b</fullName>
        <shortName evidence="5">MYRTX(1)-Pr2b</shortName>
    </recommendedName>
</protein>
<sequence length="62" mass="6603">NPWADPEAEANPEAKATAEATAEAIAEALAEPEPALPALPLLAFLFSLPAVQHWVEKNWING</sequence>
<accession>P0DXT3</accession>
<dbReference type="EMBL" id="OR128475">
    <property type="protein sequence ID" value="WMI02513.1"/>
    <property type="molecule type" value="mRNA"/>
</dbReference>
<dbReference type="GO" id="GO:0005576">
    <property type="term" value="C:extracellular region"/>
    <property type="evidence" value="ECO:0007669"/>
    <property type="project" value="UniProtKB-SubCell"/>
</dbReference>
<dbReference type="GO" id="GO:0017080">
    <property type="term" value="F:sodium channel regulator activity"/>
    <property type="evidence" value="ECO:0007669"/>
    <property type="project" value="UniProtKB-KW"/>
</dbReference>
<dbReference type="GO" id="GO:0090729">
    <property type="term" value="F:toxin activity"/>
    <property type="evidence" value="ECO:0007669"/>
    <property type="project" value="UniProtKB-KW"/>
</dbReference>
<keyword id="KW-0027">Amidation</keyword>
<keyword id="KW-0872">Ion channel impairing toxin</keyword>
<keyword id="KW-0528">Neurotoxin</keyword>
<keyword id="KW-0964">Secreted</keyword>
<keyword id="KW-0800">Toxin</keyword>
<keyword id="KW-0738">Voltage-gated sodium channel impairing toxin</keyword>
<proteinExistence type="evidence at protein level"/>